<organism>
    <name type="scientific">Burkholderia cenocepacia (strain ATCC BAA-245 / DSM 16553 / LMG 16656 / NCTC 13227 / J2315 / CF5610)</name>
    <name type="common">Burkholderia cepacia (strain J2315)</name>
    <dbReference type="NCBI Taxonomy" id="216591"/>
    <lineage>
        <taxon>Bacteria</taxon>
        <taxon>Pseudomonadati</taxon>
        <taxon>Pseudomonadota</taxon>
        <taxon>Betaproteobacteria</taxon>
        <taxon>Burkholderiales</taxon>
        <taxon>Burkholderiaceae</taxon>
        <taxon>Burkholderia</taxon>
        <taxon>Burkholderia cepacia complex</taxon>
    </lineage>
</organism>
<comment type="function">
    <text evidence="1">Participates actively in the response to hyperosmotic and heat shock by preventing the aggregation of stress-denatured proteins and by disaggregating proteins, also in an autonomous, DnaK-independent fashion. Unfolded proteins bind initially to DnaJ; upon interaction with the DnaJ-bound protein, DnaK hydrolyzes its bound ATP, resulting in the formation of a stable complex. GrpE releases ADP from DnaK; ATP binding to DnaK triggers the release of the substrate protein, thus completing the reaction cycle. Several rounds of ATP-dependent interactions between DnaJ, DnaK and GrpE are required for fully efficient folding. Also involved, together with DnaK and GrpE, in the DNA replication of plasmids through activation of initiation proteins.</text>
</comment>
<comment type="cofactor">
    <cofactor evidence="1">
        <name>Zn(2+)</name>
        <dbReference type="ChEBI" id="CHEBI:29105"/>
    </cofactor>
    <text evidence="1">Binds 2 Zn(2+) ions per monomer.</text>
</comment>
<comment type="subunit">
    <text evidence="1">Homodimer.</text>
</comment>
<comment type="subcellular location">
    <subcellularLocation>
        <location evidence="1">Cytoplasm</location>
    </subcellularLocation>
</comment>
<comment type="domain">
    <text evidence="1">The J domain is necessary and sufficient to stimulate DnaK ATPase activity. Zinc center 1 plays an important role in the autonomous, DnaK-independent chaperone activity of DnaJ. Zinc center 2 is essential for interaction with DnaK and for DnaJ activity.</text>
</comment>
<comment type="similarity">
    <text evidence="1">Belongs to the DnaJ family.</text>
</comment>
<gene>
    <name evidence="1" type="primary">dnaJ</name>
    <name type="ordered locus">BceJ2315_32090</name>
    <name type="ORF">BCAL3269</name>
</gene>
<reference key="1">
    <citation type="journal article" date="2009" name="J. Bacteriol.">
        <title>The genome of Burkholderia cenocepacia J2315, an epidemic pathogen of cystic fibrosis patients.</title>
        <authorList>
            <person name="Holden M.T."/>
            <person name="Seth-Smith H.M."/>
            <person name="Crossman L.C."/>
            <person name="Sebaihia M."/>
            <person name="Bentley S.D."/>
            <person name="Cerdeno-Tarraga A.M."/>
            <person name="Thomson N.R."/>
            <person name="Bason N."/>
            <person name="Quail M.A."/>
            <person name="Sharp S."/>
            <person name="Cherevach I."/>
            <person name="Churcher C."/>
            <person name="Goodhead I."/>
            <person name="Hauser H."/>
            <person name="Holroyd N."/>
            <person name="Mungall K."/>
            <person name="Scott P."/>
            <person name="Walker D."/>
            <person name="White B."/>
            <person name="Rose H."/>
            <person name="Iversen P."/>
            <person name="Mil-Homens D."/>
            <person name="Rocha E.P."/>
            <person name="Fialho A.M."/>
            <person name="Baldwin A."/>
            <person name="Dowson C."/>
            <person name="Barrell B.G."/>
            <person name="Govan J.R."/>
            <person name="Vandamme P."/>
            <person name="Hart C.A."/>
            <person name="Mahenthiralingam E."/>
            <person name="Parkhill J."/>
        </authorList>
    </citation>
    <scope>NUCLEOTIDE SEQUENCE [LARGE SCALE GENOMIC DNA]</scope>
    <source>
        <strain>ATCC BAA-245 / DSM 16553 / LMG 16656 / NCTC 13227 / J2315 / CF5610</strain>
    </source>
</reference>
<evidence type="ECO:0000255" key="1">
    <source>
        <dbReference type="HAMAP-Rule" id="MF_01152"/>
    </source>
</evidence>
<sequence>MAKRDYYEVLGVAKNASDDEIKKAYRKLAMKYHPDRNPDSKDAEEHFKEAKEAYEMLSDGQKRAAYDQYGHAGVDPNMGGAGAQGFGGFADAFGDIFGDIFGQAAGGAARGGRGGPQVYRGADLRYSMEITLEQAAHGYDTQIRVPSWVSCEVCHGSGAKPGTKPETCPTCHGQGTVRMSQGFFSIQQTCPKCHGTGTYIPEPCAHCHGSGKVKETKTLEVKIPAGIDDGMRIRSAGNGEPGINGGPPGDLYVEIHIKPHSVFERDGDDLHCQMPIPFTTAALGGEIEVPTLAGRASFPVPEGTQSGKTFRLRGKGIKGLRSSIAGDLYVHVQVETPVKLTDQQRDLLKQFEKSLAEGGARHSPQSKSWFDRVKSFFE</sequence>
<dbReference type="EMBL" id="AM747720">
    <property type="protein sequence ID" value="CAR53593.1"/>
    <property type="molecule type" value="Genomic_DNA"/>
</dbReference>
<dbReference type="RefSeq" id="WP_006476837.1">
    <property type="nucleotide sequence ID" value="NC_011000.1"/>
</dbReference>
<dbReference type="SMR" id="B4EDZ1"/>
<dbReference type="GeneID" id="83047520"/>
<dbReference type="KEGG" id="bcj:BCAL3269"/>
<dbReference type="eggNOG" id="COG0484">
    <property type="taxonomic scope" value="Bacteria"/>
</dbReference>
<dbReference type="HOGENOM" id="CLU_017633_0_7_4"/>
<dbReference type="BioCyc" id="BCEN216591:G1G1V-3640-MONOMER"/>
<dbReference type="Proteomes" id="UP000001035">
    <property type="component" value="Chromosome 1"/>
</dbReference>
<dbReference type="GO" id="GO:0005737">
    <property type="term" value="C:cytoplasm"/>
    <property type="evidence" value="ECO:0007669"/>
    <property type="project" value="UniProtKB-SubCell"/>
</dbReference>
<dbReference type="GO" id="GO:0005524">
    <property type="term" value="F:ATP binding"/>
    <property type="evidence" value="ECO:0007669"/>
    <property type="project" value="InterPro"/>
</dbReference>
<dbReference type="GO" id="GO:0031072">
    <property type="term" value="F:heat shock protein binding"/>
    <property type="evidence" value="ECO:0007669"/>
    <property type="project" value="InterPro"/>
</dbReference>
<dbReference type="GO" id="GO:0051082">
    <property type="term" value="F:unfolded protein binding"/>
    <property type="evidence" value="ECO:0007669"/>
    <property type="project" value="UniProtKB-UniRule"/>
</dbReference>
<dbReference type="GO" id="GO:0008270">
    <property type="term" value="F:zinc ion binding"/>
    <property type="evidence" value="ECO:0007669"/>
    <property type="project" value="UniProtKB-UniRule"/>
</dbReference>
<dbReference type="GO" id="GO:0051085">
    <property type="term" value="P:chaperone cofactor-dependent protein refolding"/>
    <property type="evidence" value="ECO:0007669"/>
    <property type="project" value="TreeGrafter"/>
</dbReference>
<dbReference type="GO" id="GO:0006260">
    <property type="term" value="P:DNA replication"/>
    <property type="evidence" value="ECO:0007669"/>
    <property type="project" value="UniProtKB-KW"/>
</dbReference>
<dbReference type="GO" id="GO:0042026">
    <property type="term" value="P:protein refolding"/>
    <property type="evidence" value="ECO:0007669"/>
    <property type="project" value="TreeGrafter"/>
</dbReference>
<dbReference type="GO" id="GO:0009408">
    <property type="term" value="P:response to heat"/>
    <property type="evidence" value="ECO:0007669"/>
    <property type="project" value="InterPro"/>
</dbReference>
<dbReference type="CDD" id="cd06257">
    <property type="entry name" value="DnaJ"/>
    <property type="match status" value="1"/>
</dbReference>
<dbReference type="CDD" id="cd10747">
    <property type="entry name" value="DnaJ_C"/>
    <property type="match status" value="1"/>
</dbReference>
<dbReference type="CDD" id="cd10719">
    <property type="entry name" value="DnaJ_zf"/>
    <property type="match status" value="1"/>
</dbReference>
<dbReference type="FunFam" id="1.10.287.110:FF:000031">
    <property type="entry name" value="Molecular chaperone DnaJ"/>
    <property type="match status" value="1"/>
</dbReference>
<dbReference type="FunFam" id="2.10.230.10:FF:000002">
    <property type="entry name" value="Molecular chaperone DnaJ"/>
    <property type="match status" value="1"/>
</dbReference>
<dbReference type="FunFam" id="2.60.260.20:FF:000004">
    <property type="entry name" value="Molecular chaperone DnaJ"/>
    <property type="match status" value="1"/>
</dbReference>
<dbReference type="Gene3D" id="1.10.287.110">
    <property type="entry name" value="DnaJ domain"/>
    <property type="match status" value="1"/>
</dbReference>
<dbReference type="Gene3D" id="2.10.230.10">
    <property type="entry name" value="Heat shock protein DnaJ, cysteine-rich domain"/>
    <property type="match status" value="1"/>
</dbReference>
<dbReference type="Gene3D" id="2.60.260.20">
    <property type="entry name" value="Urease metallochaperone UreE, N-terminal domain"/>
    <property type="match status" value="2"/>
</dbReference>
<dbReference type="HAMAP" id="MF_01152">
    <property type="entry name" value="DnaJ"/>
    <property type="match status" value="1"/>
</dbReference>
<dbReference type="InterPro" id="IPR012724">
    <property type="entry name" value="DnaJ"/>
</dbReference>
<dbReference type="InterPro" id="IPR002939">
    <property type="entry name" value="DnaJ_C"/>
</dbReference>
<dbReference type="InterPro" id="IPR001623">
    <property type="entry name" value="DnaJ_domain"/>
</dbReference>
<dbReference type="InterPro" id="IPR018253">
    <property type="entry name" value="DnaJ_domain_CS"/>
</dbReference>
<dbReference type="InterPro" id="IPR008971">
    <property type="entry name" value="HSP40/DnaJ_pept-bd"/>
</dbReference>
<dbReference type="InterPro" id="IPR001305">
    <property type="entry name" value="HSP_DnaJ_Cys-rich_dom"/>
</dbReference>
<dbReference type="InterPro" id="IPR036410">
    <property type="entry name" value="HSP_DnaJ_Cys-rich_dom_sf"/>
</dbReference>
<dbReference type="InterPro" id="IPR036869">
    <property type="entry name" value="J_dom_sf"/>
</dbReference>
<dbReference type="NCBIfam" id="TIGR02349">
    <property type="entry name" value="DnaJ_bact"/>
    <property type="match status" value="1"/>
</dbReference>
<dbReference type="NCBIfam" id="NF008035">
    <property type="entry name" value="PRK10767.1"/>
    <property type="match status" value="1"/>
</dbReference>
<dbReference type="PANTHER" id="PTHR43096:SF48">
    <property type="entry name" value="CHAPERONE PROTEIN DNAJ"/>
    <property type="match status" value="1"/>
</dbReference>
<dbReference type="PANTHER" id="PTHR43096">
    <property type="entry name" value="DNAJ HOMOLOG 1, MITOCHONDRIAL-RELATED"/>
    <property type="match status" value="1"/>
</dbReference>
<dbReference type="Pfam" id="PF00226">
    <property type="entry name" value="DnaJ"/>
    <property type="match status" value="1"/>
</dbReference>
<dbReference type="Pfam" id="PF01556">
    <property type="entry name" value="DnaJ_C"/>
    <property type="match status" value="1"/>
</dbReference>
<dbReference type="Pfam" id="PF00684">
    <property type="entry name" value="DnaJ_CXXCXGXG"/>
    <property type="match status" value="1"/>
</dbReference>
<dbReference type="PRINTS" id="PR00625">
    <property type="entry name" value="JDOMAIN"/>
</dbReference>
<dbReference type="SMART" id="SM00271">
    <property type="entry name" value="DnaJ"/>
    <property type="match status" value="1"/>
</dbReference>
<dbReference type="SUPFAM" id="SSF46565">
    <property type="entry name" value="Chaperone J-domain"/>
    <property type="match status" value="1"/>
</dbReference>
<dbReference type="SUPFAM" id="SSF57938">
    <property type="entry name" value="DnaJ/Hsp40 cysteine-rich domain"/>
    <property type="match status" value="1"/>
</dbReference>
<dbReference type="SUPFAM" id="SSF49493">
    <property type="entry name" value="HSP40/DnaJ peptide-binding domain"/>
    <property type="match status" value="2"/>
</dbReference>
<dbReference type="PROSITE" id="PS00636">
    <property type="entry name" value="DNAJ_1"/>
    <property type="match status" value="1"/>
</dbReference>
<dbReference type="PROSITE" id="PS50076">
    <property type="entry name" value="DNAJ_2"/>
    <property type="match status" value="1"/>
</dbReference>
<dbReference type="PROSITE" id="PS51188">
    <property type="entry name" value="ZF_CR"/>
    <property type="match status" value="1"/>
</dbReference>
<feature type="chain" id="PRO_1000137666" description="Chaperone protein DnaJ">
    <location>
        <begin position="1"/>
        <end position="378"/>
    </location>
</feature>
<feature type="domain" description="J" evidence="1">
    <location>
        <begin position="5"/>
        <end position="70"/>
    </location>
</feature>
<feature type="repeat" description="CXXCXGXG motif">
    <location>
        <begin position="151"/>
        <end position="158"/>
    </location>
</feature>
<feature type="repeat" description="CXXCXGXG motif">
    <location>
        <begin position="168"/>
        <end position="175"/>
    </location>
</feature>
<feature type="repeat" description="CXXCXGXG motif">
    <location>
        <begin position="190"/>
        <end position="197"/>
    </location>
</feature>
<feature type="repeat" description="CXXCXGXG motif">
    <location>
        <begin position="204"/>
        <end position="211"/>
    </location>
</feature>
<feature type="zinc finger region" description="CR-type" evidence="1">
    <location>
        <begin position="138"/>
        <end position="216"/>
    </location>
</feature>
<feature type="binding site" evidence="1">
    <location>
        <position position="151"/>
    </location>
    <ligand>
        <name>Zn(2+)</name>
        <dbReference type="ChEBI" id="CHEBI:29105"/>
        <label>1</label>
    </ligand>
</feature>
<feature type="binding site" evidence="1">
    <location>
        <position position="154"/>
    </location>
    <ligand>
        <name>Zn(2+)</name>
        <dbReference type="ChEBI" id="CHEBI:29105"/>
        <label>1</label>
    </ligand>
</feature>
<feature type="binding site" evidence="1">
    <location>
        <position position="168"/>
    </location>
    <ligand>
        <name>Zn(2+)</name>
        <dbReference type="ChEBI" id="CHEBI:29105"/>
        <label>2</label>
    </ligand>
</feature>
<feature type="binding site" evidence="1">
    <location>
        <position position="171"/>
    </location>
    <ligand>
        <name>Zn(2+)</name>
        <dbReference type="ChEBI" id="CHEBI:29105"/>
        <label>2</label>
    </ligand>
</feature>
<feature type="binding site" evidence="1">
    <location>
        <position position="190"/>
    </location>
    <ligand>
        <name>Zn(2+)</name>
        <dbReference type="ChEBI" id="CHEBI:29105"/>
        <label>2</label>
    </ligand>
</feature>
<feature type="binding site" evidence="1">
    <location>
        <position position="193"/>
    </location>
    <ligand>
        <name>Zn(2+)</name>
        <dbReference type="ChEBI" id="CHEBI:29105"/>
        <label>2</label>
    </ligand>
</feature>
<feature type="binding site" evidence="1">
    <location>
        <position position="204"/>
    </location>
    <ligand>
        <name>Zn(2+)</name>
        <dbReference type="ChEBI" id="CHEBI:29105"/>
        <label>1</label>
    </ligand>
</feature>
<feature type="binding site" evidence="1">
    <location>
        <position position="207"/>
    </location>
    <ligand>
        <name>Zn(2+)</name>
        <dbReference type="ChEBI" id="CHEBI:29105"/>
        <label>1</label>
    </ligand>
</feature>
<accession>B4EDZ1</accession>
<keyword id="KW-0143">Chaperone</keyword>
<keyword id="KW-0963">Cytoplasm</keyword>
<keyword id="KW-0235">DNA replication</keyword>
<keyword id="KW-0479">Metal-binding</keyword>
<keyword id="KW-0677">Repeat</keyword>
<keyword id="KW-0346">Stress response</keyword>
<keyword id="KW-0862">Zinc</keyword>
<keyword id="KW-0863">Zinc-finger</keyword>
<proteinExistence type="inferred from homology"/>
<name>DNAJ_BURCJ</name>
<protein>
    <recommendedName>
        <fullName evidence="1">Chaperone protein DnaJ</fullName>
    </recommendedName>
</protein>